<accession>P0DMU3</accession>
<name>F231L_HUMAN</name>
<evidence type="ECO:0000256" key="1">
    <source>
        <dbReference type="SAM" id="MobiDB-lite"/>
    </source>
</evidence>
<evidence type="ECO:0000305" key="2"/>
<comment type="similarity">
    <text evidence="2">Belongs to the FAM231 family.</text>
</comment>
<keyword id="KW-1185">Reference proteome</keyword>
<feature type="chain" id="PRO_0000433033" description="FAM231A/C-like protein LOC102723383">
    <location>
        <begin position="1"/>
        <end position="169"/>
    </location>
</feature>
<feature type="region of interest" description="Disordered" evidence="1">
    <location>
        <begin position="82"/>
        <end position="140"/>
    </location>
</feature>
<protein>
    <recommendedName>
        <fullName>FAM231A/C-like protein LOC102723383</fullName>
    </recommendedName>
</protein>
<organism>
    <name type="scientific">Homo sapiens</name>
    <name type="common">Human</name>
    <dbReference type="NCBI Taxonomy" id="9606"/>
    <lineage>
        <taxon>Eukaryota</taxon>
        <taxon>Metazoa</taxon>
        <taxon>Chordata</taxon>
        <taxon>Craniata</taxon>
        <taxon>Vertebrata</taxon>
        <taxon>Euteleostomi</taxon>
        <taxon>Mammalia</taxon>
        <taxon>Eutheria</taxon>
        <taxon>Euarchontoglires</taxon>
        <taxon>Primates</taxon>
        <taxon>Haplorrhini</taxon>
        <taxon>Catarrhini</taxon>
        <taxon>Hominidae</taxon>
        <taxon>Homo</taxon>
    </lineage>
</organism>
<reference key="1">
    <citation type="journal article" date="2006" name="Nature">
        <title>The DNA sequence and biological annotation of human chromosome 1.</title>
        <authorList>
            <person name="Gregory S.G."/>
            <person name="Barlow K.F."/>
            <person name="McLay K.E."/>
            <person name="Kaul R."/>
            <person name="Swarbreck D."/>
            <person name="Dunham A."/>
            <person name="Scott C.E."/>
            <person name="Howe K.L."/>
            <person name="Woodfine K."/>
            <person name="Spencer C.C.A."/>
            <person name="Jones M.C."/>
            <person name="Gillson C."/>
            <person name="Searle S."/>
            <person name="Zhou Y."/>
            <person name="Kokocinski F."/>
            <person name="McDonald L."/>
            <person name="Evans R."/>
            <person name="Phillips K."/>
            <person name="Atkinson A."/>
            <person name="Cooper R."/>
            <person name="Jones C."/>
            <person name="Hall R.E."/>
            <person name="Andrews T.D."/>
            <person name="Lloyd C."/>
            <person name="Ainscough R."/>
            <person name="Almeida J.P."/>
            <person name="Ambrose K.D."/>
            <person name="Anderson F."/>
            <person name="Andrew R.W."/>
            <person name="Ashwell R.I.S."/>
            <person name="Aubin K."/>
            <person name="Babbage A.K."/>
            <person name="Bagguley C.L."/>
            <person name="Bailey J."/>
            <person name="Beasley H."/>
            <person name="Bethel G."/>
            <person name="Bird C.P."/>
            <person name="Bray-Allen S."/>
            <person name="Brown J.Y."/>
            <person name="Brown A.J."/>
            <person name="Buckley D."/>
            <person name="Burton J."/>
            <person name="Bye J."/>
            <person name="Carder C."/>
            <person name="Chapman J.C."/>
            <person name="Clark S.Y."/>
            <person name="Clarke G."/>
            <person name="Clee C."/>
            <person name="Cobley V."/>
            <person name="Collier R.E."/>
            <person name="Corby N."/>
            <person name="Coville G.J."/>
            <person name="Davies J."/>
            <person name="Deadman R."/>
            <person name="Dunn M."/>
            <person name="Earthrowl M."/>
            <person name="Ellington A.G."/>
            <person name="Errington H."/>
            <person name="Frankish A."/>
            <person name="Frankland J."/>
            <person name="French L."/>
            <person name="Garner P."/>
            <person name="Garnett J."/>
            <person name="Gay L."/>
            <person name="Ghori M.R.J."/>
            <person name="Gibson R."/>
            <person name="Gilby L.M."/>
            <person name="Gillett W."/>
            <person name="Glithero R.J."/>
            <person name="Grafham D.V."/>
            <person name="Griffiths C."/>
            <person name="Griffiths-Jones S."/>
            <person name="Grocock R."/>
            <person name="Hammond S."/>
            <person name="Harrison E.S.I."/>
            <person name="Hart E."/>
            <person name="Haugen E."/>
            <person name="Heath P.D."/>
            <person name="Holmes S."/>
            <person name="Holt K."/>
            <person name="Howden P.J."/>
            <person name="Hunt A.R."/>
            <person name="Hunt S.E."/>
            <person name="Hunter G."/>
            <person name="Isherwood J."/>
            <person name="James R."/>
            <person name="Johnson C."/>
            <person name="Johnson D."/>
            <person name="Joy A."/>
            <person name="Kay M."/>
            <person name="Kershaw J.K."/>
            <person name="Kibukawa M."/>
            <person name="Kimberley A.M."/>
            <person name="King A."/>
            <person name="Knights A.J."/>
            <person name="Lad H."/>
            <person name="Laird G."/>
            <person name="Lawlor S."/>
            <person name="Leongamornlert D.A."/>
            <person name="Lloyd D.M."/>
            <person name="Loveland J."/>
            <person name="Lovell J."/>
            <person name="Lush M.J."/>
            <person name="Lyne R."/>
            <person name="Martin S."/>
            <person name="Mashreghi-Mohammadi M."/>
            <person name="Matthews L."/>
            <person name="Matthews N.S.W."/>
            <person name="McLaren S."/>
            <person name="Milne S."/>
            <person name="Mistry S."/>
            <person name="Moore M.J.F."/>
            <person name="Nickerson T."/>
            <person name="O'Dell C.N."/>
            <person name="Oliver K."/>
            <person name="Palmeiri A."/>
            <person name="Palmer S.A."/>
            <person name="Parker A."/>
            <person name="Patel D."/>
            <person name="Pearce A.V."/>
            <person name="Peck A.I."/>
            <person name="Pelan S."/>
            <person name="Phelps K."/>
            <person name="Phillimore B.J."/>
            <person name="Plumb R."/>
            <person name="Rajan J."/>
            <person name="Raymond C."/>
            <person name="Rouse G."/>
            <person name="Saenphimmachak C."/>
            <person name="Sehra H.K."/>
            <person name="Sheridan E."/>
            <person name="Shownkeen R."/>
            <person name="Sims S."/>
            <person name="Skuce C.D."/>
            <person name="Smith M."/>
            <person name="Steward C."/>
            <person name="Subramanian S."/>
            <person name="Sycamore N."/>
            <person name="Tracey A."/>
            <person name="Tromans A."/>
            <person name="Van Helmond Z."/>
            <person name="Wall M."/>
            <person name="Wallis J.M."/>
            <person name="White S."/>
            <person name="Whitehead S.L."/>
            <person name="Wilkinson J.E."/>
            <person name="Willey D.L."/>
            <person name="Williams H."/>
            <person name="Wilming L."/>
            <person name="Wray P.W."/>
            <person name="Wu Z."/>
            <person name="Coulson A."/>
            <person name="Vaudin M."/>
            <person name="Sulston J.E."/>
            <person name="Durbin R.M."/>
            <person name="Hubbard T."/>
            <person name="Wooster R."/>
            <person name="Dunham I."/>
            <person name="Carter N.P."/>
            <person name="McVean G."/>
            <person name="Ross M.T."/>
            <person name="Harrow J."/>
            <person name="Olson M.V."/>
            <person name="Beck S."/>
            <person name="Rogers J."/>
            <person name="Bentley D.R."/>
        </authorList>
    </citation>
    <scope>NUCLEOTIDE SEQUENCE [LARGE SCALE GENOMIC DNA]</scope>
</reference>
<dbReference type="EMBL" id="AL021920">
    <property type="status" value="NOT_ANNOTATED_CDS"/>
    <property type="molecule type" value="Genomic_DNA"/>
</dbReference>
<dbReference type="RefSeq" id="NP_001269250.1">
    <property type="nucleotide sequence ID" value="NM_001282321.1"/>
</dbReference>
<dbReference type="RefSeq" id="NP_001297067.1">
    <property type="nucleotide sequence ID" value="NM_001310138.1"/>
</dbReference>
<dbReference type="RefSeq" id="XP_016858568.1">
    <property type="nucleotide sequence ID" value="XM_017003079.1"/>
</dbReference>
<dbReference type="RefSeq" id="XP_047292865.1">
    <property type="nucleotide sequence ID" value="XM_047436909.1"/>
</dbReference>
<dbReference type="RefSeq" id="XP_047299216.1">
    <property type="nucleotide sequence ID" value="XM_047443260.1"/>
</dbReference>
<dbReference type="RefSeq" id="XP_047299224.1">
    <property type="nucleotide sequence ID" value="XM_047443268.1"/>
</dbReference>
<dbReference type="RefSeq" id="XP_047299603.1">
    <property type="nucleotide sequence ID" value="XM_047443647.1"/>
</dbReference>
<dbReference type="RefSeq" id="XP_047299610.1">
    <property type="nucleotide sequence ID" value="XM_047443654.1"/>
</dbReference>
<dbReference type="GlyGen" id="P0DMU3">
    <property type="glycosylation" value="1 site, 1 O-linked glycan (1 site)"/>
</dbReference>
<dbReference type="iPTMnet" id="P0DMU3"/>
<dbReference type="PhosphoSitePlus" id="P0DMU3"/>
<dbReference type="BioMuta" id="-"/>
<dbReference type="PaxDb" id="9606-ENSP00000408511"/>
<dbReference type="GeneID" id="124903857"/>
<dbReference type="GeneID" id="124905556"/>
<dbReference type="HPA" id="ENSG00000268674">
    <property type="expression patterns" value="Low tissue specificity"/>
</dbReference>
<dbReference type="neXtProt" id="NX_P0DMU3"/>
<dbReference type="VEuPathDB" id="HostDB:ENSG00000268674"/>
<dbReference type="GeneTree" id="ENSGT00390000006237"/>
<dbReference type="InParanoid" id="P0DMU3"/>
<dbReference type="OMA" id="GQERWLI"/>
<dbReference type="OrthoDB" id="9540442at2759"/>
<dbReference type="PAN-GO" id="P0DMU3">
    <property type="GO annotations" value="0 GO annotations based on evolutionary models"/>
</dbReference>
<dbReference type="PhylomeDB" id="P0DMU3"/>
<dbReference type="BioGRID-ORCS" id="102723383">
    <property type="hits" value="1 hit in 4 CRISPR screens"/>
</dbReference>
<dbReference type="BioGRID-ORCS" id="729574">
    <property type="hits" value="641 hits in 893 CRISPR screens"/>
</dbReference>
<dbReference type="BioGRID-ORCS" id="729587">
    <property type="hits" value="2 hits in 46 CRISPR screens"/>
</dbReference>
<dbReference type="Pharos" id="P0DMU3">
    <property type="development level" value="Tdark"/>
</dbReference>
<dbReference type="PRO" id="PR:P0DMU3"/>
<dbReference type="Proteomes" id="UP000005640">
    <property type="component" value="Unplaced"/>
</dbReference>
<dbReference type="RNAct" id="P0DMU3">
    <property type="molecule type" value="protein"/>
</dbReference>
<dbReference type="InterPro" id="IPR031773">
    <property type="entry name" value="DUF4741"/>
</dbReference>
<dbReference type="Pfam" id="PF15897">
    <property type="entry name" value="DUF4741"/>
    <property type="match status" value="1"/>
</dbReference>
<sequence>MVSSKGLWKERPSAHTSECFSTTACPVAFILLVWNSQTPAGLQSLCTGRHPSLSARAQRAGPRASREEGTFWTERVGQERWLIRSGSSQNESQEDQGAGLISQAGLKADNRRESSTWANEVEDRRPQCTPALNLTPSHPHPPHSLTTFLRSVIGIQIPPGLVAAGGTVA</sequence>
<proteinExistence type="inferred from homology"/>